<gene>
    <name type="primary">Ube2d3</name>
</gene>
<reference key="1">
    <citation type="journal article" date="1995" name="Biochem. J.">
        <title>Molecular cloning, expression and characterization of a ubiquitin conjugation enzyme (E2(17)kB) highly expressed in rat testis.</title>
        <authorList>
            <person name="Wing S.S."/>
            <person name="Jain P."/>
        </authorList>
    </citation>
    <scope>NUCLEOTIDE SEQUENCE [MRNA]</scope>
    <source>
        <tissue>Testis</tissue>
    </source>
</reference>
<reference key="2">
    <citation type="journal article" date="1998" name="Res. Commun. Biochem. Cell Mol. Biol.">
        <title>Nomega-phosphoarginine phosphatase activity of ubiquitin-conjugating enzymes type UBC4A/10A and UBC2E.</title>
        <authorList>
            <person name="Yokoi F."/>
            <person name="Hamato N."/>
            <person name="Kamei K."/>
            <person name="Hara S."/>
            <person name="Miyagi M."/>
            <person name="Tsunasawa S."/>
            <person name="Hiraishi H."/>
            <person name="Kumon A."/>
        </authorList>
    </citation>
    <scope>NUCLEOTIDE SEQUENCE [MRNA]</scope>
    <source>
        <strain>Sprague-Dawley</strain>
        <tissue>Liver</tissue>
    </source>
</reference>
<reference key="3">
    <citation type="journal article" date="2004" name="Genome Res.">
        <title>The status, quality, and expansion of the NIH full-length cDNA project: the Mammalian Gene Collection (MGC).</title>
        <authorList>
            <consortium name="The MGC Project Team"/>
        </authorList>
    </citation>
    <scope>NUCLEOTIDE SEQUENCE [LARGE SCALE MRNA]</scope>
    <source>
        <tissue>Heart</tissue>
    </source>
</reference>
<feature type="chain" id="PRO_0000082468" description="Ubiquitin-conjugating enzyme E2 D3">
    <location>
        <begin position="1"/>
        <end position="147"/>
    </location>
</feature>
<feature type="domain" description="UBC core" evidence="3">
    <location>
        <begin position="1"/>
        <end position="147"/>
    </location>
</feature>
<feature type="active site" description="Glycyl thioester intermediate" evidence="3 4">
    <location>
        <position position="85"/>
    </location>
</feature>
<feature type="disulfide bond" evidence="1">
    <location>
        <begin position="21"/>
        <end position="107"/>
    </location>
</feature>
<protein>
    <recommendedName>
        <fullName>Ubiquitin-conjugating enzyme E2 D3</fullName>
        <ecNumber>2.3.2.23</ecNumber>
    </recommendedName>
    <alternativeName>
        <fullName>(E3-independent) E2 ubiquitin-conjugating enzyme D3</fullName>
        <ecNumber>2.3.2.24</ecNumber>
    </alternativeName>
    <alternativeName>
        <fullName>E2 ubiquitin-conjugating enzyme D3</fullName>
    </alternativeName>
    <alternativeName>
        <fullName>Phosphoarginine phosphatase</fullName>
        <shortName>PAPase</shortName>
    </alternativeName>
    <alternativeName>
        <fullName>Ubiquitin carrier protein D3</fullName>
    </alternativeName>
    <alternativeName>
        <fullName>Ubiquitin-conjugating enzyme E2(17)KB 3</fullName>
    </alternativeName>
    <alternativeName>
        <fullName>Ubiquitin-conjugating enzyme E2-17 kDa 3</fullName>
    </alternativeName>
    <alternativeName>
        <fullName>Ubiquitin-protein ligase D3</fullName>
    </alternativeName>
</protein>
<name>UB2D3_RAT</name>
<dbReference type="EC" id="2.3.2.23"/>
<dbReference type="EC" id="2.3.2.24"/>
<dbReference type="EMBL" id="U13177">
    <property type="protein sequence ID" value="AAA85102.1"/>
    <property type="molecule type" value="mRNA"/>
</dbReference>
<dbReference type="EMBL" id="U13175">
    <property type="protein sequence ID" value="AAA85100.1"/>
    <property type="molecule type" value="mRNA"/>
</dbReference>
<dbReference type="EMBL" id="AB006852">
    <property type="protein sequence ID" value="BAA87330.1"/>
    <property type="molecule type" value="mRNA"/>
</dbReference>
<dbReference type="EMBL" id="BC072696">
    <property type="protein sequence ID" value="AAH72696.1"/>
    <property type="molecule type" value="mRNA"/>
</dbReference>
<dbReference type="PIR" id="S53358">
    <property type="entry name" value="S53358"/>
</dbReference>
<dbReference type="RefSeq" id="NP_112516.1">
    <property type="nucleotide sequence ID" value="NM_031237.1"/>
</dbReference>
<dbReference type="RefSeq" id="XP_006233398.1">
    <property type="nucleotide sequence ID" value="XM_006233336.3"/>
</dbReference>
<dbReference type="RefSeq" id="XP_006233399.1">
    <property type="nucleotide sequence ID" value="XM_006233337.2"/>
</dbReference>
<dbReference type="RefSeq" id="XP_006233400.1">
    <property type="nucleotide sequence ID" value="XM_006233338.2"/>
</dbReference>
<dbReference type="BMRB" id="P61078"/>
<dbReference type="SMR" id="P61078"/>
<dbReference type="FunCoup" id="P61078">
    <property type="interactions" value="4215"/>
</dbReference>
<dbReference type="STRING" id="10116.ENSRNOP00000060962"/>
<dbReference type="iPTMnet" id="P61078"/>
<dbReference type="PhosphoSitePlus" id="P61078"/>
<dbReference type="SwissPalm" id="P61078"/>
<dbReference type="PaxDb" id="10116-ENSRNOP00000060962"/>
<dbReference type="PeptideAtlas" id="P61078"/>
<dbReference type="Ensembl" id="ENSRNOT00000066204.4">
    <property type="protein sequence ID" value="ENSRNOP00000060962.3"/>
    <property type="gene ID" value="ENSRNOG00000013741.8"/>
</dbReference>
<dbReference type="GeneID" id="81920"/>
<dbReference type="KEGG" id="rno:81920"/>
<dbReference type="AGR" id="RGD:619912"/>
<dbReference type="CTD" id="7323"/>
<dbReference type="RGD" id="619912">
    <property type="gene designation" value="Ube2d3"/>
</dbReference>
<dbReference type="eggNOG" id="KOG0417">
    <property type="taxonomic scope" value="Eukaryota"/>
</dbReference>
<dbReference type="GeneTree" id="ENSGT00940000153169"/>
<dbReference type="HOGENOM" id="CLU_030988_13_3_1"/>
<dbReference type="InParanoid" id="P61078"/>
<dbReference type="OrthoDB" id="7851174at2759"/>
<dbReference type="PhylomeDB" id="P61078"/>
<dbReference type="Reactome" id="R-RNO-1234176">
    <property type="pathway name" value="Oxygen-dependent proline hydroxylation of Hypoxia-inducible Factor Alpha"/>
</dbReference>
<dbReference type="Reactome" id="R-RNO-201451">
    <property type="pathway name" value="Signaling by BMP"/>
</dbReference>
<dbReference type="Reactome" id="R-RNO-2173795">
    <property type="pathway name" value="Downregulation of SMAD2/3:SMAD4 transcriptional activity"/>
</dbReference>
<dbReference type="Reactome" id="R-RNO-5357905">
    <property type="pathway name" value="Regulation of TNFR1 signaling"/>
</dbReference>
<dbReference type="Reactome" id="R-RNO-8866654">
    <property type="pathway name" value="E3 ubiquitin ligases ubiquitinate target proteins"/>
</dbReference>
<dbReference type="Reactome" id="R-RNO-8951664">
    <property type="pathway name" value="Neddylation"/>
</dbReference>
<dbReference type="Reactome" id="R-RNO-9033241">
    <property type="pathway name" value="Peroxisomal protein import"/>
</dbReference>
<dbReference type="Reactome" id="R-RNO-937041">
    <property type="pathway name" value="IKK complex recruitment mediated by RIP1"/>
</dbReference>
<dbReference type="Reactome" id="R-RNO-9705462">
    <property type="pathway name" value="Inactivation of CSF3 (G-CSF) signaling"/>
</dbReference>
<dbReference type="Reactome" id="R-RNO-983168">
    <property type="pathway name" value="Antigen processing: Ubiquitination &amp; Proteasome degradation"/>
</dbReference>
<dbReference type="UniPathway" id="UPA00143"/>
<dbReference type="PRO" id="PR:P61078"/>
<dbReference type="Proteomes" id="UP000002494">
    <property type="component" value="Chromosome 2"/>
</dbReference>
<dbReference type="Bgee" id="ENSRNOG00000013741">
    <property type="expression patterns" value="Expressed in thymus and 20 other cell types or tissues"/>
</dbReference>
<dbReference type="ExpressionAtlas" id="P61078">
    <property type="expression patterns" value="baseline and differential"/>
</dbReference>
<dbReference type="GO" id="GO:0010008">
    <property type="term" value="C:endosome membrane"/>
    <property type="evidence" value="ECO:0007669"/>
    <property type="project" value="UniProtKB-SubCell"/>
</dbReference>
<dbReference type="GO" id="GO:0005634">
    <property type="term" value="C:nucleus"/>
    <property type="evidence" value="ECO:0000318"/>
    <property type="project" value="GO_Central"/>
</dbReference>
<dbReference type="GO" id="GO:0005886">
    <property type="term" value="C:plasma membrane"/>
    <property type="evidence" value="ECO:0007669"/>
    <property type="project" value="UniProtKB-SubCell"/>
</dbReference>
<dbReference type="GO" id="GO:0005524">
    <property type="term" value="F:ATP binding"/>
    <property type="evidence" value="ECO:0007669"/>
    <property type="project" value="UniProtKB-KW"/>
</dbReference>
<dbReference type="GO" id="GO:0061631">
    <property type="term" value="F:ubiquitin conjugating enzyme activity"/>
    <property type="evidence" value="ECO:0000250"/>
    <property type="project" value="UniProtKB"/>
</dbReference>
<dbReference type="GO" id="GO:0061630">
    <property type="term" value="F:ubiquitin protein ligase activity"/>
    <property type="evidence" value="ECO:0000266"/>
    <property type="project" value="RGD"/>
</dbReference>
<dbReference type="GO" id="GO:0004842">
    <property type="term" value="F:ubiquitin-protein transferase activity"/>
    <property type="evidence" value="ECO:0000314"/>
    <property type="project" value="RGD"/>
</dbReference>
<dbReference type="GO" id="GO:0006915">
    <property type="term" value="P:apoptotic process"/>
    <property type="evidence" value="ECO:0007669"/>
    <property type="project" value="UniProtKB-KW"/>
</dbReference>
<dbReference type="GO" id="GO:0071276">
    <property type="term" value="P:cellular response to cadmium ion"/>
    <property type="evidence" value="ECO:0000270"/>
    <property type="project" value="RGD"/>
</dbReference>
<dbReference type="GO" id="GO:0071288">
    <property type="term" value="P:cellular response to mercury ion"/>
    <property type="evidence" value="ECO:0000270"/>
    <property type="project" value="RGD"/>
</dbReference>
<dbReference type="GO" id="GO:0006281">
    <property type="term" value="P:DNA repair"/>
    <property type="evidence" value="ECO:0007669"/>
    <property type="project" value="UniProtKB-KW"/>
</dbReference>
<dbReference type="GO" id="GO:0043161">
    <property type="term" value="P:proteasome-mediated ubiquitin-dependent protein catabolic process"/>
    <property type="evidence" value="ECO:0000250"/>
    <property type="project" value="UniProtKB"/>
</dbReference>
<dbReference type="GO" id="GO:0051865">
    <property type="term" value="P:protein autoubiquitination"/>
    <property type="evidence" value="ECO:0000266"/>
    <property type="project" value="RGD"/>
</dbReference>
<dbReference type="GO" id="GO:0070979">
    <property type="term" value="P:protein K11-linked ubiquitination"/>
    <property type="evidence" value="ECO:0000250"/>
    <property type="project" value="UniProtKB"/>
</dbReference>
<dbReference type="GO" id="GO:0070936">
    <property type="term" value="P:protein K48-linked ubiquitination"/>
    <property type="evidence" value="ECO:0000250"/>
    <property type="project" value="UniProtKB"/>
</dbReference>
<dbReference type="GO" id="GO:0085020">
    <property type="term" value="P:protein K6-linked ubiquitination"/>
    <property type="evidence" value="ECO:0000250"/>
    <property type="project" value="UniProtKB"/>
</dbReference>
<dbReference type="GO" id="GO:0006513">
    <property type="term" value="P:protein monoubiquitination"/>
    <property type="evidence" value="ECO:0000266"/>
    <property type="project" value="RGD"/>
</dbReference>
<dbReference type="GO" id="GO:0000209">
    <property type="term" value="P:protein polyubiquitination"/>
    <property type="evidence" value="ECO:0000250"/>
    <property type="project" value="UniProtKB"/>
</dbReference>
<dbReference type="GO" id="GO:0016567">
    <property type="term" value="P:protein ubiquitination"/>
    <property type="evidence" value="ECO:0000266"/>
    <property type="project" value="RGD"/>
</dbReference>
<dbReference type="GO" id="GO:0006511">
    <property type="term" value="P:ubiquitin-dependent protein catabolic process"/>
    <property type="evidence" value="ECO:0000314"/>
    <property type="project" value="RGD"/>
</dbReference>
<dbReference type="CDD" id="cd23792">
    <property type="entry name" value="UBCc_UBE2D"/>
    <property type="match status" value="1"/>
</dbReference>
<dbReference type="FunFam" id="3.10.110.10:FF:000101">
    <property type="entry name" value="Ubiquitin-conjugating enzyme E2 D2"/>
    <property type="match status" value="1"/>
</dbReference>
<dbReference type="Gene3D" id="3.10.110.10">
    <property type="entry name" value="Ubiquitin Conjugating Enzyme"/>
    <property type="match status" value="1"/>
</dbReference>
<dbReference type="InterPro" id="IPR000608">
    <property type="entry name" value="UBQ-conjugat_E2_core"/>
</dbReference>
<dbReference type="InterPro" id="IPR023313">
    <property type="entry name" value="UBQ-conjugating_AS"/>
</dbReference>
<dbReference type="InterPro" id="IPR016135">
    <property type="entry name" value="UBQ-conjugating_enzyme/RWD"/>
</dbReference>
<dbReference type="PANTHER" id="PTHR24068">
    <property type="entry name" value="UBIQUITIN-CONJUGATING ENZYME E2"/>
    <property type="match status" value="1"/>
</dbReference>
<dbReference type="Pfam" id="PF00179">
    <property type="entry name" value="UQ_con"/>
    <property type="match status" value="1"/>
</dbReference>
<dbReference type="SMART" id="SM00212">
    <property type="entry name" value="UBCc"/>
    <property type="match status" value="1"/>
</dbReference>
<dbReference type="SUPFAM" id="SSF54495">
    <property type="entry name" value="UBC-like"/>
    <property type="match status" value="1"/>
</dbReference>
<dbReference type="PROSITE" id="PS00183">
    <property type="entry name" value="UBC_1"/>
    <property type="match status" value="1"/>
</dbReference>
<dbReference type="PROSITE" id="PS50127">
    <property type="entry name" value="UBC_2"/>
    <property type="match status" value="1"/>
</dbReference>
<comment type="function">
    <text evidence="1">Accepts ubiquitin from the E1 complex and catalyzes its covalent attachment to other proteins. In vitro catalyzes 'Lys-11'-, as well as 'Lys-48'-linked polyubiquitination. Cooperates with the E2 CDC34 and the SCF(FBXW11) E3 ligase complex for the polyubiquitination of NFKBIA leading to its subsequent proteasomal degradation. Acts as an initiator E2, priming the phosphorylated NFKBIA target at positions 'Lys-21' and/or 'Lys-22' with a monoubiquitin. Ubiquitin chain elongation is then performed by CDC34, building ubiquitin chains from the UBE2D3-primed NFKBIA-linked ubiquitin. Also acts as an initiator E2, in conjunction with RNF8, for the priming of PCNA. Monoubiquitination of PCNA, and its subsequent polyubiquitination, are essential events in the operation of the DNA damage tolerance (DDT) pathway that is activated after DNA damage caused by UV or chemical agents during S-phase. Associates with the BRCA1/BARD1 E3 ligase complex to perform ubiquitination at DNA damage sites following ionizing radiation leading to DNA repair. Targets DAPK3 for ubiquitination which influences promyelocytic leukemia protein nuclear body (PML-NB) formation in the nucleus. In conjunction with the MDM2 and TOPORS E3 ligases, functions ubiquitination of p53/TP53. In conjunction with the CBL E3 ligase, targets EGFR for polyubiquitination at the plasma membrane as well as during its internalization and transport on endosomes. In conjunction with the STUB1 E3 quality control E3 ligase, ubiquitinates unfolded proteins to catalyze their immediate destruction. Together with RNF135, catalyzes the viral RNA-dependent 'Lys-63'-linked polyubiquitination of RIGI to activate the downstream signaling pathway that leads to interferon beta production. Together with ZNF598, catalyzes ubiquitination of 40S ribosomal proteins in response to ribosome collisions. In cooperation with the GATOR2 complex, catalyzes 'Lys-6'-linked ubiquitination of NPRL2.</text>
</comment>
<comment type="catalytic activity">
    <reaction evidence="1 3 4">
        <text>S-ubiquitinyl-[E1 ubiquitin-activating enzyme]-L-cysteine + [E2 ubiquitin-conjugating enzyme]-L-cysteine = [E1 ubiquitin-activating enzyme]-L-cysteine + S-ubiquitinyl-[E2 ubiquitin-conjugating enzyme]-L-cysteine.</text>
        <dbReference type="EC" id="2.3.2.23"/>
    </reaction>
</comment>
<comment type="catalytic activity">
    <reaction evidence="1">
        <text>S-ubiquitinyl-[E1 ubiquitin-activating enzyme]-L-cysteine + [acceptor protein]-L-lysine = [E1 ubiquitin-activating enzyme]-L-cysteine + N(6)-monoubiquitinyl-[acceptor protein]-L-lysine.</text>
        <dbReference type="EC" id="2.3.2.24"/>
    </reaction>
</comment>
<comment type="pathway">
    <text evidence="3">Protein modification; protein ubiquitination.</text>
</comment>
<comment type="subunit">
    <text evidence="1">Interacts with SCF (SKP1-CUL1-F-box protein) E3 ubiquitin ligase complex; when Cullin is neddylated, the interaction between the E2 and the SCF complex is strengthened. Interacts with DAPK3. Interacts with BRCA1; the DNA damage checkpoint promotes the association with BRCA1 after ionizing radiation. Interacts non-covalently with ubiquitin. Interacts with E3 ubiquitin-protein ligase CBLC. Interacts with UBTD1 (By similarity). Interacts with RIGI and RNF135; involved in RIGI ubiquitination and activation (By similarity).</text>
</comment>
<comment type="subcellular location">
    <subcellularLocation>
        <location evidence="1">Cell membrane</location>
        <topology evidence="1">Peripheral membrane protein</topology>
    </subcellularLocation>
    <subcellularLocation>
        <location evidence="1">Endosome membrane</location>
        <topology evidence="1">Peripheral membrane protein</topology>
    </subcellularLocation>
</comment>
<comment type="PTM">
    <text evidence="2">Phosphorylated by AURKB.</text>
</comment>
<comment type="similarity">
    <text evidence="3">Belongs to the ubiquitin-conjugating enzyme family.</text>
</comment>
<proteinExistence type="evidence at transcript level"/>
<organism>
    <name type="scientific">Rattus norvegicus</name>
    <name type="common">Rat</name>
    <dbReference type="NCBI Taxonomy" id="10116"/>
    <lineage>
        <taxon>Eukaryota</taxon>
        <taxon>Metazoa</taxon>
        <taxon>Chordata</taxon>
        <taxon>Craniata</taxon>
        <taxon>Vertebrata</taxon>
        <taxon>Euteleostomi</taxon>
        <taxon>Mammalia</taxon>
        <taxon>Eutheria</taxon>
        <taxon>Euarchontoglires</taxon>
        <taxon>Glires</taxon>
        <taxon>Rodentia</taxon>
        <taxon>Myomorpha</taxon>
        <taxon>Muroidea</taxon>
        <taxon>Muridae</taxon>
        <taxon>Murinae</taxon>
        <taxon>Rattus</taxon>
    </lineage>
</organism>
<accession>P61078</accession>
<accession>P47986</accession>
<evidence type="ECO:0000250" key="1">
    <source>
        <dbReference type="UniProtKB" id="P61077"/>
    </source>
</evidence>
<evidence type="ECO:0000250" key="2">
    <source>
        <dbReference type="UniProtKB" id="P61079"/>
    </source>
</evidence>
<evidence type="ECO:0000255" key="3">
    <source>
        <dbReference type="PROSITE-ProRule" id="PRU00388"/>
    </source>
</evidence>
<evidence type="ECO:0000255" key="4">
    <source>
        <dbReference type="PROSITE-ProRule" id="PRU10133"/>
    </source>
</evidence>
<sequence length="147" mass="16687">MALKRINKELSDLARDPPAQCSAGPVGDDMFHWQATIMGPNDSPYQGGVFFLTIHFPTDYPFKPPKVAFTTRIYHPNINSNGSICLDILRSQWSPALTISKVLLSICSLLCDPNPDDPLVPEIARIYKTDRDKYNRISREWTQKYAM</sequence>
<keyword id="KW-0053">Apoptosis</keyword>
<keyword id="KW-0067">ATP-binding</keyword>
<keyword id="KW-1003">Cell membrane</keyword>
<keyword id="KW-1015">Disulfide bond</keyword>
<keyword id="KW-0227">DNA damage</keyword>
<keyword id="KW-0234">DNA repair</keyword>
<keyword id="KW-0967">Endosome</keyword>
<keyword id="KW-0472">Membrane</keyword>
<keyword id="KW-0547">Nucleotide-binding</keyword>
<keyword id="KW-0597">Phosphoprotein</keyword>
<keyword id="KW-1185">Reference proteome</keyword>
<keyword id="KW-0808">Transferase</keyword>
<keyword id="KW-0833">Ubl conjugation pathway</keyword>